<reference key="1">
    <citation type="journal article" date="2008" name="Proc. Natl. Acad. Sci. U.S.A.">
        <title>The genome of Cyanothece 51142, a unicellular diazotrophic cyanobacterium important in the marine nitrogen cycle.</title>
        <authorList>
            <person name="Welsh E.A."/>
            <person name="Liberton M."/>
            <person name="Stoeckel J."/>
            <person name="Loh T."/>
            <person name="Elvitigala T."/>
            <person name="Wang C."/>
            <person name="Wollam A."/>
            <person name="Fulton R.S."/>
            <person name="Clifton S.W."/>
            <person name="Jacobs J.M."/>
            <person name="Aurora R."/>
            <person name="Ghosh B.K."/>
            <person name="Sherman L.A."/>
            <person name="Smith R.D."/>
            <person name="Wilson R.K."/>
            <person name="Pakrasi H.B."/>
        </authorList>
    </citation>
    <scope>NUCLEOTIDE SEQUENCE [LARGE SCALE GENOMIC DNA]</scope>
    <source>
        <strain>ATCC 51142 / BH68</strain>
    </source>
</reference>
<dbReference type="EC" id="2.7.7.6" evidence="1"/>
<dbReference type="EMBL" id="CP000806">
    <property type="protein sequence ID" value="ACB53186.1"/>
    <property type="molecule type" value="Genomic_DNA"/>
</dbReference>
<dbReference type="RefSeq" id="WP_009547177.1">
    <property type="nucleotide sequence ID" value="NC_010546.1"/>
</dbReference>
<dbReference type="SMR" id="B1WP07"/>
<dbReference type="STRING" id="43989.cce_3838"/>
<dbReference type="KEGG" id="cyt:cce_3838"/>
<dbReference type="eggNOG" id="COG0086">
    <property type="taxonomic scope" value="Bacteria"/>
</dbReference>
<dbReference type="HOGENOM" id="CLU_030022_2_0_3"/>
<dbReference type="OrthoDB" id="9815296at2"/>
<dbReference type="Proteomes" id="UP000001203">
    <property type="component" value="Chromosome circular"/>
</dbReference>
<dbReference type="GO" id="GO:0000428">
    <property type="term" value="C:DNA-directed RNA polymerase complex"/>
    <property type="evidence" value="ECO:0007669"/>
    <property type="project" value="UniProtKB-KW"/>
</dbReference>
<dbReference type="GO" id="GO:0003677">
    <property type="term" value="F:DNA binding"/>
    <property type="evidence" value="ECO:0007669"/>
    <property type="project" value="UniProtKB-UniRule"/>
</dbReference>
<dbReference type="GO" id="GO:0003899">
    <property type="term" value="F:DNA-directed RNA polymerase activity"/>
    <property type="evidence" value="ECO:0007669"/>
    <property type="project" value="UniProtKB-UniRule"/>
</dbReference>
<dbReference type="GO" id="GO:0000287">
    <property type="term" value="F:magnesium ion binding"/>
    <property type="evidence" value="ECO:0007669"/>
    <property type="project" value="UniProtKB-UniRule"/>
</dbReference>
<dbReference type="GO" id="GO:0008270">
    <property type="term" value="F:zinc ion binding"/>
    <property type="evidence" value="ECO:0007669"/>
    <property type="project" value="UniProtKB-UniRule"/>
</dbReference>
<dbReference type="GO" id="GO:0006351">
    <property type="term" value="P:DNA-templated transcription"/>
    <property type="evidence" value="ECO:0007669"/>
    <property type="project" value="UniProtKB-UniRule"/>
</dbReference>
<dbReference type="Gene3D" id="1.10.40.90">
    <property type="match status" value="1"/>
</dbReference>
<dbReference type="Gene3D" id="2.40.40.20">
    <property type="match status" value="1"/>
</dbReference>
<dbReference type="Gene3D" id="4.10.860.120">
    <property type="entry name" value="RNA polymerase II, clamp domain"/>
    <property type="match status" value="1"/>
</dbReference>
<dbReference type="Gene3D" id="1.10.274.100">
    <property type="entry name" value="RNA polymerase Rpb1, domain 3"/>
    <property type="match status" value="1"/>
</dbReference>
<dbReference type="HAMAP" id="MF_01323">
    <property type="entry name" value="RNApol_bact_RpoC1"/>
    <property type="match status" value="1"/>
</dbReference>
<dbReference type="InterPro" id="IPR012755">
    <property type="entry name" value="DNA-dir_RpoC1_gamma"/>
</dbReference>
<dbReference type="InterPro" id="IPR045867">
    <property type="entry name" value="DNA-dir_RpoC_beta_prime"/>
</dbReference>
<dbReference type="InterPro" id="IPR000722">
    <property type="entry name" value="RNA_pol_asu"/>
</dbReference>
<dbReference type="InterPro" id="IPR006592">
    <property type="entry name" value="RNA_pol_N"/>
</dbReference>
<dbReference type="InterPro" id="IPR007080">
    <property type="entry name" value="RNA_pol_Rpb1_1"/>
</dbReference>
<dbReference type="InterPro" id="IPR007066">
    <property type="entry name" value="RNA_pol_Rpb1_3"/>
</dbReference>
<dbReference type="InterPro" id="IPR042102">
    <property type="entry name" value="RNA_pol_Rpb1_3_sf"/>
</dbReference>
<dbReference type="InterPro" id="IPR044893">
    <property type="entry name" value="RNA_pol_Rpb1_clamp_domain"/>
</dbReference>
<dbReference type="InterPro" id="IPR034678">
    <property type="entry name" value="RNApol_RpoC1"/>
</dbReference>
<dbReference type="NCBIfam" id="NF002729">
    <property type="entry name" value="PRK02625.1"/>
    <property type="match status" value="1"/>
</dbReference>
<dbReference type="NCBIfam" id="TIGR02387">
    <property type="entry name" value="rpoC1_cyan"/>
    <property type="match status" value="1"/>
</dbReference>
<dbReference type="PANTHER" id="PTHR19376">
    <property type="entry name" value="DNA-DIRECTED RNA POLYMERASE"/>
    <property type="match status" value="1"/>
</dbReference>
<dbReference type="PANTHER" id="PTHR19376:SF54">
    <property type="entry name" value="DNA-DIRECTED RNA POLYMERASE SUBUNIT BETA"/>
    <property type="match status" value="1"/>
</dbReference>
<dbReference type="Pfam" id="PF04997">
    <property type="entry name" value="RNA_pol_Rpb1_1"/>
    <property type="match status" value="1"/>
</dbReference>
<dbReference type="Pfam" id="PF00623">
    <property type="entry name" value="RNA_pol_Rpb1_2"/>
    <property type="match status" value="2"/>
</dbReference>
<dbReference type="Pfam" id="PF04983">
    <property type="entry name" value="RNA_pol_Rpb1_3"/>
    <property type="match status" value="1"/>
</dbReference>
<dbReference type="SMART" id="SM00663">
    <property type="entry name" value="RPOLA_N"/>
    <property type="match status" value="1"/>
</dbReference>
<dbReference type="SUPFAM" id="SSF64484">
    <property type="entry name" value="beta and beta-prime subunits of DNA dependent RNA-polymerase"/>
    <property type="match status" value="1"/>
</dbReference>
<keyword id="KW-0240">DNA-directed RNA polymerase</keyword>
<keyword id="KW-0460">Magnesium</keyword>
<keyword id="KW-0479">Metal-binding</keyword>
<keyword id="KW-0548">Nucleotidyltransferase</keyword>
<keyword id="KW-1185">Reference proteome</keyword>
<keyword id="KW-0804">Transcription</keyword>
<keyword id="KW-0808">Transferase</keyword>
<keyword id="KW-0862">Zinc</keyword>
<comment type="function">
    <text evidence="1">DNA-dependent RNA polymerase catalyzes the transcription of DNA into RNA using the four ribonucleoside triphosphates as substrates.</text>
</comment>
<comment type="catalytic activity">
    <reaction evidence="1">
        <text>RNA(n) + a ribonucleoside 5'-triphosphate = RNA(n+1) + diphosphate</text>
        <dbReference type="Rhea" id="RHEA:21248"/>
        <dbReference type="Rhea" id="RHEA-COMP:14527"/>
        <dbReference type="Rhea" id="RHEA-COMP:17342"/>
        <dbReference type="ChEBI" id="CHEBI:33019"/>
        <dbReference type="ChEBI" id="CHEBI:61557"/>
        <dbReference type="ChEBI" id="CHEBI:140395"/>
        <dbReference type="EC" id="2.7.7.6"/>
    </reaction>
</comment>
<comment type="cofactor">
    <cofactor evidence="1">
        <name>Mg(2+)</name>
        <dbReference type="ChEBI" id="CHEBI:18420"/>
    </cofactor>
    <text evidence="1">Binds 1 Mg(2+) ion per subunit.</text>
</comment>
<comment type="cofactor">
    <cofactor evidence="1">
        <name>Zn(2+)</name>
        <dbReference type="ChEBI" id="CHEBI:29105"/>
    </cofactor>
    <text evidence="1">Binds 1 Zn(2+) ion per subunit.</text>
</comment>
<comment type="subunit">
    <text evidence="1">In cyanobacteria the RNAP catalytic core is composed of 2 alpha, 1 beta, 1 beta', 1 gamma and 1 omega subunit. When a sigma factor is associated with the core the holoenzyme is formed, which can initiate transcription.</text>
</comment>
<comment type="similarity">
    <text evidence="1">Belongs to the RNA polymerase beta' chain family. RpoC1 subfamily.</text>
</comment>
<gene>
    <name evidence="1" type="primary">rpoC1</name>
    <name type="ordered locus">cce_3838</name>
</gene>
<name>RPOC1_CROS5</name>
<accession>B1WP07</accession>
<organism>
    <name type="scientific">Crocosphaera subtropica (strain ATCC 51142 / BH68)</name>
    <name type="common">Cyanothece sp. (strain ATCC 51142)</name>
    <dbReference type="NCBI Taxonomy" id="43989"/>
    <lineage>
        <taxon>Bacteria</taxon>
        <taxon>Bacillati</taxon>
        <taxon>Cyanobacteriota</taxon>
        <taxon>Cyanophyceae</taxon>
        <taxon>Oscillatoriophycideae</taxon>
        <taxon>Chroococcales</taxon>
        <taxon>Aphanothecaceae</taxon>
        <taxon>Crocosphaera</taxon>
        <taxon>Crocosphaera subtropica</taxon>
    </lineage>
</organism>
<protein>
    <recommendedName>
        <fullName evidence="1">DNA-directed RNA polymerase subunit gamma</fullName>
        <shortName evidence="1">RNAP subunit gamma</shortName>
        <ecNumber evidence="1">2.7.7.6</ecNumber>
    </recommendedName>
    <alternativeName>
        <fullName evidence="1">RNA polymerase subunit gamma</fullName>
    </alternativeName>
    <alternativeName>
        <fullName evidence="1">Transcriptase subunit gamma</fullName>
    </alternativeName>
</protein>
<sequence>MKPAQDTRFDYVKIGLASPERVRQWGERTLPNGVVVGEVTKPETINYRTLKPEMDGLFCERIFGPSKDWECWCGKYKRVRHRGIVCERCGVEVTESRVRRHRMGYIKLAAPVTHVWYLKGIPSYMSILLDMALRDVEQIVYFNAYVVLDPGNASNLSYKQLLTEDQWIEIEDQIYAEDSDLYGIEVGIGAEAIQRLLQEMNLEEIAEILREEIAQSKGQKRAKLIKRLRVIDNFIATGSLPAWMVLDVIPVIPPDLRPMVQLDGGRFATSDLNDLYRRVINRNNRLARLQEILAPEIIVRNEKRMLQEAVDALIDNGRRGRTVVGANNRPLKSLSDIIEGKQGRFRQNLLGKRVDYSGRSVIVVGPKLKIYQCGLPREMAIELFQPFVIHRLIRLGLVNNIKAAKKLIIKGDPSVWNVLEEVITGHPVLLNRAPTLHRLGIQAFEPILVEGRAIQLHPLVCPAFNADFDGDQMAVHVPLSLESQAEARLLMLACHNILSPATGKPIVAPSQDMVLGCYYLTAENPQSQKGNGRYFGNIDDAVKAFEHGLVDLHAYVWLRSEDPNEEVVTDLPDTEVLKTETLEDGSVIKHYRERRVREIDGEAVSQFIRTTPGRIIYNKTIQDALTVA</sequence>
<evidence type="ECO:0000255" key="1">
    <source>
        <dbReference type="HAMAP-Rule" id="MF_01323"/>
    </source>
</evidence>
<feature type="chain" id="PRO_1000165858" description="DNA-directed RNA polymerase subunit gamma">
    <location>
        <begin position="1"/>
        <end position="628"/>
    </location>
</feature>
<feature type="binding site" evidence="1">
    <location>
        <position position="71"/>
    </location>
    <ligand>
        <name>Zn(2+)</name>
        <dbReference type="ChEBI" id="CHEBI:29105"/>
    </ligand>
</feature>
<feature type="binding site" evidence="1">
    <location>
        <position position="73"/>
    </location>
    <ligand>
        <name>Zn(2+)</name>
        <dbReference type="ChEBI" id="CHEBI:29105"/>
    </ligand>
</feature>
<feature type="binding site" evidence="1">
    <location>
        <position position="86"/>
    </location>
    <ligand>
        <name>Zn(2+)</name>
        <dbReference type="ChEBI" id="CHEBI:29105"/>
    </ligand>
</feature>
<feature type="binding site" evidence="1">
    <location>
        <position position="89"/>
    </location>
    <ligand>
        <name>Zn(2+)</name>
        <dbReference type="ChEBI" id="CHEBI:29105"/>
    </ligand>
</feature>
<feature type="binding site" evidence="1">
    <location>
        <position position="467"/>
    </location>
    <ligand>
        <name>Mg(2+)</name>
        <dbReference type="ChEBI" id="CHEBI:18420"/>
    </ligand>
</feature>
<feature type="binding site" evidence="1">
    <location>
        <position position="469"/>
    </location>
    <ligand>
        <name>Mg(2+)</name>
        <dbReference type="ChEBI" id="CHEBI:18420"/>
    </ligand>
</feature>
<feature type="binding site" evidence="1">
    <location>
        <position position="471"/>
    </location>
    <ligand>
        <name>Mg(2+)</name>
        <dbReference type="ChEBI" id="CHEBI:18420"/>
    </ligand>
</feature>
<proteinExistence type="inferred from homology"/>